<evidence type="ECO:0000255" key="1">
    <source>
        <dbReference type="HAMAP-Rule" id="MF_00183"/>
    </source>
</evidence>
<feature type="chain" id="PRO_1000020226" description="1-deoxy-D-xylulose 5-phosphate reductoisomerase">
    <location>
        <begin position="1"/>
        <end position="398"/>
    </location>
</feature>
<feature type="binding site" evidence="1">
    <location>
        <position position="11"/>
    </location>
    <ligand>
        <name>NADPH</name>
        <dbReference type="ChEBI" id="CHEBI:57783"/>
    </ligand>
</feature>
<feature type="binding site" evidence="1">
    <location>
        <position position="12"/>
    </location>
    <ligand>
        <name>NADPH</name>
        <dbReference type="ChEBI" id="CHEBI:57783"/>
    </ligand>
</feature>
<feature type="binding site" evidence="1">
    <location>
        <position position="13"/>
    </location>
    <ligand>
        <name>NADPH</name>
        <dbReference type="ChEBI" id="CHEBI:57783"/>
    </ligand>
</feature>
<feature type="binding site" evidence="1">
    <location>
        <position position="14"/>
    </location>
    <ligand>
        <name>NADPH</name>
        <dbReference type="ChEBI" id="CHEBI:57783"/>
    </ligand>
</feature>
<feature type="binding site" evidence="1">
    <location>
        <position position="38"/>
    </location>
    <ligand>
        <name>NADPH</name>
        <dbReference type="ChEBI" id="CHEBI:57783"/>
    </ligand>
</feature>
<feature type="binding site" evidence="1">
    <location>
        <position position="39"/>
    </location>
    <ligand>
        <name>NADPH</name>
        <dbReference type="ChEBI" id="CHEBI:57783"/>
    </ligand>
</feature>
<feature type="binding site" evidence="1">
    <location>
        <position position="125"/>
    </location>
    <ligand>
        <name>NADPH</name>
        <dbReference type="ChEBI" id="CHEBI:57783"/>
    </ligand>
</feature>
<feature type="binding site" evidence="1">
    <location>
        <position position="126"/>
    </location>
    <ligand>
        <name>1-deoxy-D-xylulose 5-phosphate</name>
        <dbReference type="ChEBI" id="CHEBI:57792"/>
    </ligand>
</feature>
<feature type="binding site" evidence="1">
    <location>
        <position position="127"/>
    </location>
    <ligand>
        <name>NADPH</name>
        <dbReference type="ChEBI" id="CHEBI:57783"/>
    </ligand>
</feature>
<feature type="binding site" evidence="1">
    <location>
        <position position="151"/>
    </location>
    <ligand>
        <name>Mn(2+)</name>
        <dbReference type="ChEBI" id="CHEBI:29035"/>
    </ligand>
</feature>
<feature type="binding site" evidence="1">
    <location>
        <position position="152"/>
    </location>
    <ligand>
        <name>1-deoxy-D-xylulose 5-phosphate</name>
        <dbReference type="ChEBI" id="CHEBI:57792"/>
    </ligand>
</feature>
<feature type="binding site" evidence="1">
    <location>
        <position position="153"/>
    </location>
    <ligand>
        <name>1-deoxy-D-xylulose 5-phosphate</name>
        <dbReference type="ChEBI" id="CHEBI:57792"/>
    </ligand>
</feature>
<feature type="binding site" evidence="1">
    <location>
        <position position="153"/>
    </location>
    <ligand>
        <name>Mn(2+)</name>
        <dbReference type="ChEBI" id="CHEBI:29035"/>
    </ligand>
</feature>
<feature type="binding site" evidence="1">
    <location>
        <position position="179"/>
    </location>
    <ligand>
        <name>1-deoxy-D-xylulose 5-phosphate</name>
        <dbReference type="ChEBI" id="CHEBI:57792"/>
    </ligand>
</feature>
<feature type="binding site" evidence="1">
    <location>
        <position position="202"/>
    </location>
    <ligand>
        <name>1-deoxy-D-xylulose 5-phosphate</name>
        <dbReference type="ChEBI" id="CHEBI:57792"/>
    </ligand>
</feature>
<feature type="binding site" evidence="1">
    <location>
        <position position="208"/>
    </location>
    <ligand>
        <name>NADPH</name>
        <dbReference type="ChEBI" id="CHEBI:57783"/>
    </ligand>
</feature>
<feature type="binding site" evidence="1">
    <location>
        <position position="215"/>
    </location>
    <ligand>
        <name>1-deoxy-D-xylulose 5-phosphate</name>
        <dbReference type="ChEBI" id="CHEBI:57792"/>
    </ligand>
</feature>
<feature type="binding site" evidence="1">
    <location>
        <position position="220"/>
    </location>
    <ligand>
        <name>1-deoxy-D-xylulose 5-phosphate</name>
        <dbReference type="ChEBI" id="CHEBI:57792"/>
    </ligand>
</feature>
<feature type="binding site" evidence="1">
    <location>
        <position position="221"/>
    </location>
    <ligand>
        <name>1-deoxy-D-xylulose 5-phosphate</name>
        <dbReference type="ChEBI" id="CHEBI:57792"/>
    </ligand>
</feature>
<feature type="binding site" evidence="1">
    <location>
        <position position="224"/>
    </location>
    <ligand>
        <name>1-deoxy-D-xylulose 5-phosphate</name>
        <dbReference type="ChEBI" id="CHEBI:57792"/>
    </ligand>
</feature>
<feature type="binding site" evidence="1">
    <location>
        <position position="224"/>
    </location>
    <ligand>
        <name>Mn(2+)</name>
        <dbReference type="ChEBI" id="CHEBI:29035"/>
    </ligand>
</feature>
<comment type="function">
    <text evidence="1">Catalyzes the NADPH-dependent rearrangement and reduction of 1-deoxy-D-xylulose-5-phosphate (DXP) to 2-C-methyl-D-erythritol 4-phosphate (MEP).</text>
</comment>
<comment type="catalytic activity">
    <reaction evidence="1">
        <text>2-C-methyl-D-erythritol 4-phosphate + NADP(+) = 1-deoxy-D-xylulose 5-phosphate + NADPH + H(+)</text>
        <dbReference type="Rhea" id="RHEA:13717"/>
        <dbReference type="ChEBI" id="CHEBI:15378"/>
        <dbReference type="ChEBI" id="CHEBI:57783"/>
        <dbReference type="ChEBI" id="CHEBI:57792"/>
        <dbReference type="ChEBI" id="CHEBI:58262"/>
        <dbReference type="ChEBI" id="CHEBI:58349"/>
        <dbReference type="EC" id="1.1.1.267"/>
    </reaction>
    <physiologicalReaction direction="right-to-left" evidence="1">
        <dbReference type="Rhea" id="RHEA:13719"/>
    </physiologicalReaction>
</comment>
<comment type="cofactor">
    <cofactor evidence="1">
        <name>Mg(2+)</name>
        <dbReference type="ChEBI" id="CHEBI:18420"/>
    </cofactor>
    <cofactor evidence="1">
        <name>Mn(2+)</name>
        <dbReference type="ChEBI" id="CHEBI:29035"/>
    </cofactor>
</comment>
<comment type="pathway">
    <text evidence="1">Isoprenoid biosynthesis; isopentenyl diphosphate biosynthesis via DXP pathway; isopentenyl diphosphate from 1-deoxy-D-xylulose 5-phosphate: step 1/6.</text>
</comment>
<comment type="similarity">
    <text evidence="1">Belongs to the DXR family.</text>
</comment>
<sequence length="398" mass="41622">MQKRLTLLGSTGSIGDSTLDVVARHPERFAVHALTAHRNGEKLVAQCLRFAPDVAVVGDAETAARVEAQLRAAGSRTQVAYGKQALVDVSKSDGCDTVVAAIVGAAGLAPSLAAARAGKRILLANKEALVMSGAIFMDAVRDHGAILLPVDSEHNAIFQCMPRDAAEHGGIAKIIVTASGGPFRTREPATLASVTPDEACKHPNWVMGRKISVDSATMMNKGLEVIEAHWLFGLPSEHIDVLIHPQSVIHSLVSYRDGSVLAQLGNPDMRTPIAHALAFPERVDAGVAQLDLAQIATLTFEKPDYARFPCLALAIDALEAGGVASAALNAANEIAVDAFLSRRIRFTAIAQTVGAVLDGLSNRTPGGLDDVIEADAAARRAATAFIGKLPAPGVERAA</sequence>
<keyword id="KW-0414">Isoprene biosynthesis</keyword>
<keyword id="KW-0464">Manganese</keyword>
<keyword id="KW-0479">Metal-binding</keyword>
<keyword id="KW-0521">NADP</keyword>
<keyword id="KW-0560">Oxidoreductase</keyword>
<gene>
    <name evidence="1" type="primary">dxr</name>
    <name type="ordered locus">BMA10247_1322</name>
</gene>
<reference key="1">
    <citation type="journal article" date="2010" name="Genome Biol. Evol.">
        <title>Continuing evolution of Burkholderia mallei through genome reduction and large-scale rearrangements.</title>
        <authorList>
            <person name="Losada L."/>
            <person name="Ronning C.M."/>
            <person name="DeShazer D."/>
            <person name="Woods D."/>
            <person name="Fedorova N."/>
            <person name="Kim H.S."/>
            <person name="Shabalina S.A."/>
            <person name="Pearson T.R."/>
            <person name="Brinkac L."/>
            <person name="Tan P."/>
            <person name="Nandi T."/>
            <person name="Crabtree J."/>
            <person name="Badger J."/>
            <person name="Beckstrom-Sternberg S."/>
            <person name="Saqib M."/>
            <person name="Schutzer S.E."/>
            <person name="Keim P."/>
            <person name="Nierman W.C."/>
        </authorList>
    </citation>
    <scope>NUCLEOTIDE SEQUENCE [LARGE SCALE GENOMIC DNA]</scope>
    <source>
        <strain>NCTC 10247</strain>
    </source>
</reference>
<proteinExistence type="inferred from homology"/>
<accession>A3MKT7</accession>
<organism>
    <name type="scientific">Burkholderia mallei (strain NCTC 10247)</name>
    <dbReference type="NCBI Taxonomy" id="320389"/>
    <lineage>
        <taxon>Bacteria</taxon>
        <taxon>Pseudomonadati</taxon>
        <taxon>Pseudomonadota</taxon>
        <taxon>Betaproteobacteria</taxon>
        <taxon>Burkholderiales</taxon>
        <taxon>Burkholderiaceae</taxon>
        <taxon>Burkholderia</taxon>
        <taxon>pseudomallei group</taxon>
    </lineage>
</organism>
<name>DXR_BURM7</name>
<dbReference type="EC" id="1.1.1.267" evidence="1"/>
<dbReference type="EMBL" id="CP000548">
    <property type="protein sequence ID" value="ABO05726.1"/>
    <property type="molecule type" value="Genomic_DNA"/>
</dbReference>
<dbReference type="RefSeq" id="WP_004193915.1">
    <property type="nucleotide sequence ID" value="NZ_CP007802.1"/>
</dbReference>
<dbReference type="SMR" id="A3MKT7"/>
<dbReference type="KEGG" id="bmaz:BM44_1804"/>
<dbReference type="KEGG" id="bmn:BMA10247_1322"/>
<dbReference type="PATRIC" id="fig|320389.8.peg.2018"/>
<dbReference type="UniPathway" id="UPA00056">
    <property type="reaction ID" value="UER00092"/>
</dbReference>
<dbReference type="GO" id="GO:0030604">
    <property type="term" value="F:1-deoxy-D-xylulose-5-phosphate reductoisomerase activity"/>
    <property type="evidence" value="ECO:0007669"/>
    <property type="project" value="UniProtKB-UniRule"/>
</dbReference>
<dbReference type="GO" id="GO:0030145">
    <property type="term" value="F:manganese ion binding"/>
    <property type="evidence" value="ECO:0007669"/>
    <property type="project" value="TreeGrafter"/>
</dbReference>
<dbReference type="GO" id="GO:0070402">
    <property type="term" value="F:NADPH binding"/>
    <property type="evidence" value="ECO:0007669"/>
    <property type="project" value="InterPro"/>
</dbReference>
<dbReference type="GO" id="GO:0051484">
    <property type="term" value="P:isopentenyl diphosphate biosynthetic process, methylerythritol 4-phosphate pathway involved in terpenoid biosynthetic process"/>
    <property type="evidence" value="ECO:0007669"/>
    <property type="project" value="TreeGrafter"/>
</dbReference>
<dbReference type="FunFam" id="1.10.1740.10:FF:000004">
    <property type="entry name" value="1-deoxy-D-xylulose 5-phosphate reductoisomerase"/>
    <property type="match status" value="1"/>
</dbReference>
<dbReference type="FunFam" id="3.40.50.720:FF:000045">
    <property type="entry name" value="1-deoxy-D-xylulose 5-phosphate reductoisomerase"/>
    <property type="match status" value="1"/>
</dbReference>
<dbReference type="Gene3D" id="1.10.1740.10">
    <property type="match status" value="1"/>
</dbReference>
<dbReference type="Gene3D" id="3.40.50.720">
    <property type="entry name" value="NAD(P)-binding Rossmann-like Domain"/>
    <property type="match status" value="1"/>
</dbReference>
<dbReference type="HAMAP" id="MF_00183">
    <property type="entry name" value="DXP_reductoisom"/>
    <property type="match status" value="1"/>
</dbReference>
<dbReference type="InterPro" id="IPR003821">
    <property type="entry name" value="DXP_reductoisomerase"/>
</dbReference>
<dbReference type="InterPro" id="IPR013644">
    <property type="entry name" value="DXP_reductoisomerase_C"/>
</dbReference>
<dbReference type="InterPro" id="IPR013512">
    <property type="entry name" value="DXP_reductoisomerase_N"/>
</dbReference>
<dbReference type="InterPro" id="IPR026877">
    <property type="entry name" value="DXPR_C"/>
</dbReference>
<dbReference type="InterPro" id="IPR036169">
    <property type="entry name" value="DXPR_C_sf"/>
</dbReference>
<dbReference type="InterPro" id="IPR036291">
    <property type="entry name" value="NAD(P)-bd_dom_sf"/>
</dbReference>
<dbReference type="NCBIfam" id="TIGR00243">
    <property type="entry name" value="Dxr"/>
    <property type="match status" value="1"/>
</dbReference>
<dbReference type="NCBIfam" id="NF003938">
    <property type="entry name" value="PRK05447.1-1"/>
    <property type="match status" value="1"/>
</dbReference>
<dbReference type="NCBIfam" id="NF009114">
    <property type="entry name" value="PRK12464.1"/>
    <property type="match status" value="1"/>
</dbReference>
<dbReference type="PANTHER" id="PTHR30525">
    <property type="entry name" value="1-DEOXY-D-XYLULOSE 5-PHOSPHATE REDUCTOISOMERASE"/>
    <property type="match status" value="1"/>
</dbReference>
<dbReference type="PANTHER" id="PTHR30525:SF0">
    <property type="entry name" value="1-DEOXY-D-XYLULOSE 5-PHOSPHATE REDUCTOISOMERASE, CHLOROPLASTIC"/>
    <property type="match status" value="1"/>
</dbReference>
<dbReference type="Pfam" id="PF08436">
    <property type="entry name" value="DXP_redisom_C"/>
    <property type="match status" value="1"/>
</dbReference>
<dbReference type="Pfam" id="PF02670">
    <property type="entry name" value="DXP_reductoisom"/>
    <property type="match status" value="1"/>
</dbReference>
<dbReference type="Pfam" id="PF13288">
    <property type="entry name" value="DXPR_C"/>
    <property type="match status" value="1"/>
</dbReference>
<dbReference type="PIRSF" id="PIRSF006205">
    <property type="entry name" value="Dxp_reductismrs"/>
    <property type="match status" value="1"/>
</dbReference>
<dbReference type="SUPFAM" id="SSF69055">
    <property type="entry name" value="1-deoxy-D-xylulose-5-phosphate reductoisomerase, C-terminal domain"/>
    <property type="match status" value="1"/>
</dbReference>
<dbReference type="SUPFAM" id="SSF55347">
    <property type="entry name" value="Glyceraldehyde-3-phosphate dehydrogenase-like, C-terminal domain"/>
    <property type="match status" value="1"/>
</dbReference>
<dbReference type="SUPFAM" id="SSF51735">
    <property type="entry name" value="NAD(P)-binding Rossmann-fold domains"/>
    <property type="match status" value="1"/>
</dbReference>
<protein>
    <recommendedName>
        <fullName evidence="1">1-deoxy-D-xylulose 5-phosphate reductoisomerase</fullName>
        <shortName evidence="1">DXP reductoisomerase</shortName>
        <ecNumber evidence="1">1.1.1.267</ecNumber>
    </recommendedName>
    <alternativeName>
        <fullName evidence="1">1-deoxyxylulose-5-phosphate reductoisomerase</fullName>
    </alternativeName>
    <alternativeName>
        <fullName evidence="1">2-C-methyl-D-erythritol 4-phosphate synthase</fullName>
    </alternativeName>
</protein>